<accession>A4QJD0</accession>
<geneLocation type="chloroplast"/>
<comment type="function">
    <text evidence="1">One of the components of the core complex of photosystem II (PSII). PSII is a light-driven water:plastoquinone oxidoreductase that uses light energy to abstract electrons from H(2)O, generating O(2) and a proton gradient subsequently used for ATP formation. It consists of a core antenna complex that captures photons, and an electron transfer chain that converts photonic excitation into a charge separation. This subunit is found at the monomer-monomer interface and is required for correct PSII assembly and/or dimerization.</text>
</comment>
<comment type="subunit">
    <text evidence="1">PSII is composed of 1 copy each of membrane proteins PsbA, PsbB, PsbC, PsbD, PsbE, PsbF, PsbH, PsbI, PsbJ, PsbK, PsbL, PsbM, PsbT, PsbX, PsbY, PsbZ, Psb30/Ycf12, at least 3 peripheral proteins of the oxygen-evolving complex and a large number of cofactors. It forms dimeric complexes.</text>
</comment>
<comment type="subcellular location">
    <subcellularLocation>
        <location evidence="1">Plastid</location>
        <location evidence="1">Chloroplast thylakoid membrane</location>
        <topology evidence="1">Single-pass membrane protein</topology>
    </subcellularLocation>
</comment>
<comment type="similarity">
    <text evidence="1">Belongs to the PsbL family.</text>
</comment>
<gene>
    <name evidence="1" type="primary">psbL</name>
</gene>
<sequence length="38" mass="4511">MTQSNPNEQNVELNRTSLYWGLLLIFVLAILFSNYFFN</sequence>
<proteinExistence type="inferred from homology"/>
<protein>
    <recommendedName>
        <fullName evidence="1">Photosystem II reaction center protein L</fullName>
        <shortName evidence="1">PSII-L</shortName>
    </recommendedName>
</protein>
<feature type="chain" id="PRO_0000306219" description="Photosystem II reaction center protein L">
    <location>
        <begin position="1"/>
        <end position="38"/>
    </location>
</feature>
<feature type="transmembrane region" description="Helical" evidence="1">
    <location>
        <begin position="17"/>
        <end position="37"/>
    </location>
</feature>
<name>PSBL_AETCO</name>
<reference key="1">
    <citation type="submission" date="2007-03" db="EMBL/GenBank/DDBJ databases">
        <title>Sequencing analysis of Aethionema coridifolium chloroplast DNA.</title>
        <authorList>
            <person name="Hosouchi T."/>
            <person name="Tsuruoka H."/>
            <person name="Kotani H."/>
        </authorList>
    </citation>
    <scope>NUCLEOTIDE SEQUENCE [LARGE SCALE GENOMIC DNA]</scope>
</reference>
<organism>
    <name type="scientific">Aethionema cordifolium</name>
    <name type="common">Lebanon stonecress</name>
    <dbReference type="NCBI Taxonomy" id="434059"/>
    <lineage>
        <taxon>Eukaryota</taxon>
        <taxon>Viridiplantae</taxon>
        <taxon>Streptophyta</taxon>
        <taxon>Embryophyta</taxon>
        <taxon>Tracheophyta</taxon>
        <taxon>Spermatophyta</taxon>
        <taxon>Magnoliopsida</taxon>
        <taxon>eudicotyledons</taxon>
        <taxon>Gunneridae</taxon>
        <taxon>Pentapetalae</taxon>
        <taxon>rosids</taxon>
        <taxon>malvids</taxon>
        <taxon>Brassicales</taxon>
        <taxon>Brassicaceae</taxon>
        <taxon>Aethionemeae</taxon>
        <taxon>Aethionema</taxon>
    </lineage>
</organism>
<keyword id="KW-0150">Chloroplast</keyword>
<keyword id="KW-0472">Membrane</keyword>
<keyword id="KW-0602">Photosynthesis</keyword>
<keyword id="KW-0604">Photosystem II</keyword>
<keyword id="KW-0934">Plastid</keyword>
<keyword id="KW-0674">Reaction center</keyword>
<keyword id="KW-0793">Thylakoid</keyword>
<keyword id="KW-0812">Transmembrane</keyword>
<keyword id="KW-1133">Transmembrane helix</keyword>
<dbReference type="EMBL" id="AP009366">
    <property type="protein sequence ID" value="BAF49785.1"/>
    <property type="molecule type" value="Genomic_DNA"/>
</dbReference>
<dbReference type="RefSeq" id="YP_001122961.1">
    <property type="nucleotide sequence ID" value="NC_009265.1"/>
</dbReference>
<dbReference type="SMR" id="A4QJD0"/>
<dbReference type="GeneID" id="4968630"/>
<dbReference type="GO" id="GO:0009535">
    <property type="term" value="C:chloroplast thylakoid membrane"/>
    <property type="evidence" value="ECO:0007669"/>
    <property type="project" value="UniProtKB-SubCell"/>
</dbReference>
<dbReference type="GO" id="GO:0009539">
    <property type="term" value="C:photosystem II reaction center"/>
    <property type="evidence" value="ECO:0007669"/>
    <property type="project" value="InterPro"/>
</dbReference>
<dbReference type="GO" id="GO:0015979">
    <property type="term" value="P:photosynthesis"/>
    <property type="evidence" value="ECO:0007669"/>
    <property type="project" value="UniProtKB-UniRule"/>
</dbReference>
<dbReference type="HAMAP" id="MF_01317">
    <property type="entry name" value="PSII_PsbL"/>
    <property type="match status" value="1"/>
</dbReference>
<dbReference type="InterPro" id="IPR003372">
    <property type="entry name" value="PSII_PsbL"/>
</dbReference>
<dbReference type="InterPro" id="IPR037266">
    <property type="entry name" value="PSII_PsbL_sf"/>
</dbReference>
<dbReference type="NCBIfam" id="NF001972">
    <property type="entry name" value="PRK00753.1"/>
    <property type="match status" value="1"/>
</dbReference>
<dbReference type="Pfam" id="PF02419">
    <property type="entry name" value="PsbL"/>
    <property type="match status" value="1"/>
</dbReference>
<dbReference type="SUPFAM" id="SSF161017">
    <property type="entry name" value="Photosystem II reaction center protein L, PsbL"/>
    <property type="match status" value="1"/>
</dbReference>
<evidence type="ECO:0000255" key="1">
    <source>
        <dbReference type="HAMAP-Rule" id="MF_01317"/>
    </source>
</evidence>